<accession>C4XMN4</accession>
<protein>
    <recommendedName>
        <fullName evidence="1">NADH-quinone oxidoreductase subunit K</fullName>
        <ecNumber evidence="1">7.1.1.-</ecNumber>
    </recommendedName>
    <alternativeName>
        <fullName evidence="1">NADH dehydrogenase I subunit K</fullName>
    </alternativeName>
    <alternativeName>
        <fullName evidence="1">NDH-1 subunit K</fullName>
    </alternativeName>
</protein>
<organism>
    <name type="scientific">Solidesulfovibrio magneticus (strain ATCC 700980 / DSM 13731 / RS-1)</name>
    <name type="common">Desulfovibrio magneticus</name>
    <dbReference type="NCBI Taxonomy" id="573370"/>
    <lineage>
        <taxon>Bacteria</taxon>
        <taxon>Pseudomonadati</taxon>
        <taxon>Thermodesulfobacteriota</taxon>
        <taxon>Desulfovibrionia</taxon>
        <taxon>Desulfovibrionales</taxon>
        <taxon>Desulfovibrionaceae</taxon>
        <taxon>Solidesulfovibrio</taxon>
    </lineage>
</organism>
<dbReference type="EC" id="7.1.1.-" evidence="1"/>
<dbReference type="EMBL" id="AP010904">
    <property type="protein sequence ID" value="BAH74825.1"/>
    <property type="molecule type" value="Genomic_DNA"/>
</dbReference>
<dbReference type="RefSeq" id="WP_015860035.1">
    <property type="nucleotide sequence ID" value="NC_012796.1"/>
</dbReference>
<dbReference type="SMR" id="C4XMN4"/>
<dbReference type="STRING" id="573370.DMR_13340"/>
<dbReference type="KEGG" id="dma:DMR_13340"/>
<dbReference type="eggNOG" id="COG0713">
    <property type="taxonomic scope" value="Bacteria"/>
</dbReference>
<dbReference type="HOGENOM" id="CLU_144724_0_1_7"/>
<dbReference type="Proteomes" id="UP000009071">
    <property type="component" value="Chromosome"/>
</dbReference>
<dbReference type="GO" id="GO:0030964">
    <property type="term" value="C:NADH dehydrogenase complex"/>
    <property type="evidence" value="ECO:0007669"/>
    <property type="project" value="TreeGrafter"/>
</dbReference>
<dbReference type="GO" id="GO:0005886">
    <property type="term" value="C:plasma membrane"/>
    <property type="evidence" value="ECO:0007669"/>
    <property type="project" value="UniProtKB-SubCell"/>
</dbReference>
<dbReference type="GO" id="GO:0050136">
    <property type="term" value="F:NADH:ubiquinone reductase (non-electrogenic) activity"/>
    <property type="evidence" value="ECO:0007669"/>
    <property type="project" value="UniProtKB-UniRule"/>
</dbReference>
<dbReference type="GO" id="GO:0048038">
    <property type="term" value="F:quinone binding"/>
    <property type="evidence" value="ECO:0007669"/>
    <property type="project" value="UniProtKB-KW"/>
</dbReference>
<dbReference type="GO" id="GO:0042773">
    <property type="term" value="P:ATP synthesis coupled electron transport"/>
    <property type="evidence" value="ECO:0007669"/>
    <property type="project" value="InterPro"/>
</dbReference>
<dbReference type="Gene3D" id="1.10.287.3510">
    <property type="match status" value="1"/>
</dbReference>
<dbReference type="HAMAP" id="MF_01456">
    <property type="entry name" value="NDH1_NuoK"/>
    <property type="match status" value="1"/>
</dbReference>
<dbReference type="InterPro" id="IPR001133">
    <property type="entry name" value="NADH_UbQ_OxRdtase_chain4L/K"/>
</dbReference>
<dbReference type="InterPro" id="IPR039428">
    <property type="entry name" value="NUOK/Mnh_C1-like"/>
</dbReference>
<dbReference type="PANTHER" id="PTHR11434:SF16">
    <property type="entry name" value="NADH-UBIQUINONE OXIDOREDUCTASE CHAIN 4L"/>
    <property type="match status" value="1"/>
</dbReference>
<dbReference type="PANTHER" id="PTHR11434">
    <property type="entry name" value="NADH-UBIQUINONE OXIDOREDUCTASE SUBUNIT ND4L"/>
    <property type="match status" value="1"/>
</dbReference>
<dbReference type="Pfam" id="PF00420">
    <property type="entry name" value="Oxidored_q2"/>
    <property type="match status" value="1"/>
</dbReference>
<reference key="1">
    <citation type="journal article" date="2009" name="Genome Res.">
        <title>Whole genome sequence of Desulfovibrio magneticus strain RS-1 revealed common gene clusters in magnetotactic bacteria.</title>
        <authorList>
            <person name="Nakazawa H."/>
            <person name="Arakaki A."/>
            <person name="Narita-Yamada S."/>
            <person name="Yashiro I."/>
            <person name="Jinno K."/>
            <person name="Aoki N."/>
            <person name="Tsuruyama A."/>
            <person name="Okamura Y."/>
            <person name="Tanikawa S."/>
            <person name="Fujita N."/>
            <person name="Takeyama H."/>
            <person name="Matsunaga T."/>
        </authorList>
    </citation>
    <scope>NUCLEOTIDE SEQUENCE [LARGE SCALE GENOMIC DNA]</scope>
    <source>
        <strain>ATCC 700980 / DSM 13731 / RS-1</strain>
    </source>
</reference>
<keyword id="KW-0997">Cell inner membrane</keyword>
<keyword id="KW-1003">Cell membrane</keyword>
<keyword id="KW-0472">Membrane</keyword>
<keyword id="KW-0520">NAD</keyword>
<keyword id="KW-0874">Quinone</keyword>
<keyword id="KW-1278">Translocase</keyword>
<keyword id="KW-0812">Transmembrane</keyword>
<keyword id="KW-1133">Transmembrane helix</keyword>
<keyword id="KW-0813">Transport</keyword>
<keyword id="KW-0830">Ubiquinone</keyword>
<gene>
    <name evidence="1" type="primary">nuoK</name>
    <name type="ordered locus">DMR_13340</name>
</gene>
<feature type="chain" id="PRO_0000390032" description="NADH-quinone oxidoreductase subunit K">
    <location>
        <begin position="1"/>
        <end position="103"/>
    </location>
</feature>
<feature type="transmembrane region" description="Helical" evidence="1">
    <location>
        <begin position="1"/>
        <end position="21"/>
    </location>
</feature>
<feature type="transmembrane region" description="Helical" evidence="1">
    <location>
        <begin position="29"/>
        <end position="49"/>
    </location>
</feature>
<feature type="transmembrane region" description="Helical" evidence="1">
    <location>
        <begin position="62"/>
        <end position="82"/>
    </location>
</feature>
<feature type="region of interest" description="Disordered" evidence="2">
    <location>
        <begin position="84"/>
        <end position="103"/>
    </location>
</feature>
<feature type="compositionally biased region" description="Basic and acidic residues" evidence="2">
    <location>
        <begin position="88"/>
        <end position="103"/>
    </location>
</feature>
<evidence type="ECO:0000255" key="1">
    <source>
        <dbReference type="HAMAP-Rule" id="MF_01456"/>
    </source>
</evidence>
<evidence type="ECO:0000256" key="2">
    <source>
        <dbReference type="SAM" id="MobiDB-lite"/>
    </source>
</evidence>
<proteinExistence type="inferred from homology"/>
<name>NUOK_SOLM1</name>
<comment type="function">
    <text evidence="1">NDH-1 shuttles electrons from NADH, via FMN and iron-sulfur (Fe-S) centers, to quinones in the respiratory chain. The immediate electron acceptor for the enzyme in this species is believed to be ubiquinone. Couples the redox reaction to proton translocation (for every two electrons transferred, four hydrogen ions are translocated across the cytoplasmic membrane), and thus conserves the redox energy in a proton gradient.</text>
</comment>
<comment type="catalytic activity">
    <reaction evidence="1">
        <text>a quinone + NADH + 5 H(+)(in) = a quinol + NAD(+) + 4 H(+)(out)</text>
        <dbReference type="Rhea" id="RHEA:57888"/>
        <dbReference type="ChEBI" id="CHEBI:15378"/>
        <dbReference type="ChEBI" id="CHEBI:24646"/>
        <dbReference type="ChEBI" id="CHEBI:57540"/>
        <dbReference type="ChEBI" id="CHEBI:57945"/>
        <dbReference type="ChEBI" id="CHEBI:132124"/>
    </reaction>
</comment>
<comment type="subunit">
    <text evidence="1">NDH-1 is composed of 14 different subunits. Subunits NuoA, H, J, K, L, M, N constitute the membrane sector of the complex.</text>
</comment>
<comment type="subcellular location">
    <subcellularLocation>
        <location evidence="1">Cell inner membrane</location>
        <topology evidence="1">Multi-pass membrane protein</topology>
    </subcellularLocation>
</comment>
<comment type="similarity">
    <text evidence="1">Belongs to the complex I subunit 4L family.</text>
</comment>
<sequence length="103" mass="10369">MIVPLSHVLAVAALLFAVGGVMAAARRSILLILIGVEFMLAAAGLAFAGAGLAWNNLDGQAAVIIIMGLASAEAGLGLALLVHGRRGGGTDRADSYDRLGEES</sequence>